<comment type="subcellular location">
    <subcellularLocation>
        <location evidence="2">Membrane</location>
        <topology evidence="2">Multi-pass membrane protein</topology>
    </subcellularLocation>
</comment>
<comment type="miscellaneous">
    <text evidence="2">Almost completely overlaps SUE1.</text>
</comment>
<comment type="caution">
    <text evidence="3">Product of a dubious gene prediction unlikely to encode a functional protein. Because of that it is not part of the S.cerevisiae S288c complete/reference proteome set.</text>
</comment>
<organism>
    <name type="scientific">Saccharomyces cerevisiae (strain ATCC 204508 / S288c)</name>
    <name type="common">Baker's yeast</name>
    <dbReference type="NCBI Taxonomy" id="559292"/>
    <lineage>
        <taxon>Eukaryota</taxon>
        <taxon>Fungi</taxon>
        <taxon>Dikarya</taxon>
        <taxon>Ascomycota</taxon>
        <taxon>Saccharomycotina</taxon>
        <taxon>Saccharomycetes</taxon>
        <taxon>Saccharomycetales</taxon>
        <taxon>Saccharomycetaceae</taxon>
        <taxon>Saccharomyces</taxon>
    </lineage>
</organism>
<evidence type="ECO:0000255" key="1"/>
<evidence type="ECO:0000305" key="2"/>
<evidence type="ECO:0000305" key="3">
    <source>
    </source>
</evidence>
<accession>O13572</accession>
<accession>Q6B0Z5</accession>
<proteinExistence type="uncertain"/>
<gene>
    <name type="ordered locus">YPR150W</name>
    <name type="ORF">P9659.2A</name>
</gene>
<sequence>MRNRAIKSFSICICQIFIIYFIFFLLLCVNRICSALSNGFNFLIIYGGTFFHSGKYSIPILDVDHQLNGNSSLGTVGLYFHVPFTPPDIIPPVPRSPNNMFLCFFSSIVFASAFVFSFIVNNVCKDFLFLSLNSGFSFTGYITGLYPLYRISRVSSLASKYCVVGTLGSDLKS</sequence>
<protein>
    <recommendedName>
        <fullName>Putative uncharacterized protein YPR150W</fullName>
    </recommendedName>
</protein>
<dbReference type="EMBL" id="U40829">
    <property type="protein sequence ID" value="AAB68295.1"/>
    <property type="molecule type" value="Genomic_DNA"/>
</dbReference>
<dbReference type="EMBL" id="AY693285">
    <property type="protein sequence ID" value="AAT93304.1"/>
    <property type="molecule type" value="Genomic_DNA"/>
</dbReference>
<dbReference type="PIR" id="S69468">
    <property type="entry name" value="S69468"/>
</dbReference>
<dbReference type="IntAct" id="O13572">
    <property type="interactions" value="1"/>
</dbReference>
<dbReference type="PaxDb" id="4932-YPR150W"/>
<dbReference type="EnsemblFungi" id="YPR150W_mRNA">
    <property type="protein sequence ID" value="YPR150W"/>
    <property type="gene ID" value="YPR150W"/>
</dbReference>
<dbReference type="AGR" id="SGD:S000006354"/>
<dbReference type="SGD" id="S000006354">
    <property type="gene designation" value="YPR150W"/>
</dbReference>
<dbReference type="HOGENOM" id="CLU_1548828_0_0_1"/>
<dbReference type="GO" id="GO:0016020">
    <property type="term" value="C:membrane"/>
    <property type="evidence" value="ECO:0007669"/>
    <property type="project" value="UniProtKB-SubCell"/>
</dbReference>
<name>YPR50_YEAST</name>
<feature type="chain" id="PRO_0000299831" description="Putative uncharacterized protein YPR150W">
    <location>
        <begin position="1"/>
        <end position="173"/>
    </location>
</feature>
<feature type="transmembrane region" description="Helical" evidence="1">
    <location>
        <begin position="9"/>
        <end position="29"/>
    </location>
</feature>
<feature type="transmembrane region" description="Helical" evidence="1">
    <location>
        <begin position="32"/>
        <end position="52"/>
    </location>
</feature>
<feature type="transmembrane region" description="Helical" evidence="1">
    <location>
        <begin position="100"/>
        <end position="120"/>
    </location>
</feature>
<feature type="transmembrane region" description="Helical" evidence="1">
    <location>
        <begin position="127"/>
        <end position="147"/>
    </location>
</feature>
<feature type="sequence conflict" description="In Ref. 3; AAT93304." evidence="2" ref="3">
    <original>F</original>
    <variation>S</variation>
    <location>
        <position position="129"/>
    </location>
</feature>
<reference key="1">
    <citation type="journal article" date="1997" name="Nature">
        <title>The nucleotide sequence of Saccharomyces cerevisiae chromosome XVI.</title>
        <authorList>
            <person name="Bussey H."/>
            <person name="Storms R.K."/>
            <person name="Ahmed A."/>
            <person name="Albermann K."/>
            <person name="Allen E."/>
            <person name="Ansorge W."/>
            <person name="Araujo R."/>
            <person name="Aparicio A."/>
            <person name="Barrell B.G."/>
            <person name="Badcock K."/>
            <person name="Benes V."/>
            <person name="Botstein D."/>
            <person name="Bowman S."/>
            <person name="Brueckner M."/>
            <person name="Carpenter J."/>
            <person name="Cherry J.M."/>
            <person name="Chung E."/>
            <person name="Churcher C.M."/>
            <person name="Coster F."/>
            <person name="Davis K."/>
            <person name="Davis R.W."/>
            <person name="Dietrich F.S."/>
            <person name="Delius H."/>
            <person name="DiPaolo T."/>
            <person name="Dubois E."/>
            <person name="Duesterhoeft A."/>
            <person name="Duncan M."/>
            <person name="Floeth M."/>
            <person name="Fortin N."/>
            <person name="Friesen J.D."/>
            <person name="Fritz C."/>
            <person name="Goffeau A."/>
            <person name="Hall J."/>
            <person name="Hebling U."/>
            <person name="Heumann K."/>
            <person name="Hilbert H."/>
            <person name="Hillier L.W."/>
            <person name="Hunicke-Smith S."/>
            <person name="Hyman R.W."/>
            <person name="Johnston M."/>
            <person name="Kalman S."/>
            <person name="Kleine K."/>
            <person name="Komp C."/>
            <person name="Kurdi O."/>
            <person name="Lashkari D."/>
            <person name="Lew H."/>
            <person name="Lin A."/>
            <person name="Lin D."/>
            <person name="Louis E.J."/>
            <person name="Marathe R."/>
            <person name="Messenguy F."/>
            <person name="Mewes H.-W."/>
            <person name="Mirtipati S."/>
            <person name="Moestl D."/>
            <person name="Mueller-Auer S."/>
            <person name="Namath A."/>
            <person name="Nentwich U."/>
            <person name="Oefner P."/>
            <person name="Pearson D."/>
            <person name="Petel F.X."/>
            <person name="Pohl T.M."/>
            <person name="Purnelle B."/>
            <person name="Rajandream M.A."/>
            <person name="Rechmann S."/>
            <person name="Rieger M."/>
            <person name="Riles L."/>
            <person name="Roberts D."/>
            <person name="Schaefer M."/>
            <person name="Scharfe M."/>
            <person name="Scherens B."/>
            <person name="Schramm S."/>
            <person name="Schroeder M."/>
            <person name="Sdicu A.-M."/>
            <person name="Tettelin H."/>
            <person name="Urrestarazu L.A."/>
            <person name="Ushinsky S."/>
            <person name="Vierendeels F."/>
            <person name="Vissers S."/>
            <person name="Voss H."/>
            <person name="Walsh S.V."/>
            <person name="Wambutt R."/>
            <person name="Wang Y."/>
            <person name="Wedler E."/>
            <person name="Wedler H."/>
            <person name="Winnett E."/>
            <person name="Zhong W.-W."/>
            <person name="Zollner A."/>
            <person name="Vo D.H."/>
            <person name="Hani J."/>
        </authorList>
    </citation>
    <scope>NUCLEOTIDE SEQUENCE [LARGE SCALE GENOMIC DNA]</scope>
    <source>
        <strain>ATCC 204508 / S288c</strain>
    </source>
</reference>
<reference key="2">
    <citation type="journal article" date="2014" name="G3 (Bethesda)">
        <title>The reference genome sequence of Saccharomyces cerevisiae: Then and now.</title>
        <authorList>
            <person name="Engel S.R."/>
            <person name="Dietrich F.S."/>
            <person name="Fisk D.G."/>
            <person name="Binkley G."/>
            <person name="Balakrishnan R."/>
            <person name="Costanzo M.C."/>
            <person name="Dwight S.S."/>
            <person name="Hitz B.C."/>
            <person name="Karra K."/>
            <person name="Nash R.S."/>
            <person name="Weng S."/>
            <person name="Wong E.D."/>
            <person name="Lloyd P."/>
            <person name="Skrzypek M.S."/>
            <person name="Miyasato S.R."/>
            <person name="Simison M."/>
            <person name="Cherry J.M."/>
        </authorList>
    </citation>
    <scope>GENOME REANNOTATION</scope>
    <source>
        <strain>ATCC 204508 / S288c</strain>
    </source>
</reference>
<reference key="3">
    <citation type="journal article" date="2007" name="Genome Res.">
        <title>Approaching a complete repository of sequence-verified protein-encoding clones for Saccharomyces cerevisiae.</title>
        <authorList>
            <person name="Hu Y."/>
            <person name="Rolfs A."/>
            <person name="Bhullar B."/>
            <person name="Murthy T.V.S."/>
            <person name="Zhu C."/>
            <person name="Berger M.F."/>
            <person name="Camargo A.A."/>
            <person name="Kelley F."/>
            <person name="McCarron S."/>
            <person name="Jepson D."/>
            <person name="Richardson A."/>
            <person name="Raphael J."/>
            <person name="Moreira D."/>
            <person name="Taycher E."/>
            <person name="Zuo D."/>
            <person name="Mohr S."/>
            <person name="Kane M.F."/>
            <person name="Williamson J."/>
            <person name="Simpson A.J.G."/>
            <person name="Bulyk M.L."/>
            <person name="Harlow E."/>
            <person name="Marsischky G."/>
            <person name="Kolodner R.D."/>
            <person name="LaBaer J."/>
        </authorList>
    </citation>
    <scope>NUCLEOTIDE SEQUENCE [GENOMIC DNA]</scope>
    <source>
        <strain>ATCC 204508 / S288c</strain>
    </source>
</reference>
<keyword id="KW-0472">Membrane</keyword>
<keyword id="KW-0812">Transmembrane</keyword>
<keyword id="KW-1133">Transmembrane helix</keyword>